<organism>
    <name type="scientific">Escherichia coli O157:H7 (strain EC4115 / EHEC)</name>
    <dbReference type="NCBI Taxonomy" id="444450"/>
    <lineage>
        <taxon>Bacteria</taxon>
        <taxon>Pseudomonadati</taxon>
        <taxon>Pseudomonadota</taxon>
        <taxon>Gammaproteobacteria</taxon>
        <taxon>Enterobacterales</taxon>
        <taxon>Enterobacteriaceae</taxon>
        <taxon>Escherichia</taxon>
    </lineage>
</organism>
<reference key="1">
    <citation type="journal article" date="2011" name="Proc. Natl. Acad. Sci. U.S.A.">
        <title>Genomic anatomy of Escherichia coli O157:H7 outbreaks.</title>
        <authorList>
            <person name="Eppinger M."/>
            <person name="Mammel M.K."/>
            <person name="Leclerc J.E."/>
            <person name="Ravel J."/>
            <person name="Cebula T.A."/>
        </authorList>
    </citation>
    <scope>NUCLEOTIDE SEQUENCE [LARGE SCALE GENOMIC DNA]</scope>
    <source>
        <strain>EC4115 / EHEC</strain>
    </source>
</reference>
<dbReference type="EC" id="3.1.3.-" evidence="1"/>
<dbReference type="EMBL" id="CP001164">
    <property type="protein sequence ID" value="ACI38403.1"/>
    <property type="molecule type" value="Genomic_DNA"/>
</dbReference>
<dbReference type="RefSeq" id="WP_001301758.1">
    <property type="nucleotide sequence ID" value="NC_011353.1"/>
</dbReference>
<dbReference type="SMR" id="B5YX43"/>
<dbReference type="KEGG" id="ecf:ECH74115_3393"/>
<dbReference type="HOGENOM" id="CLU_106705_1_0_6"/>
<dbReference type="UniPathway" id="UPA00451"/>
<dbReference type="GO" id="GO:0042597">
    <property type="term" value="C:periplasmic space"/>
    <property type="evidence" value="ECO:0007669"/>
    <property type="project" value="UniProtKB-SubCell"/>
</dbReference>
<dbReference type="GO" id="GO:0016791">
    <property type="term" value="F:phosphatase activity"/>
    <property type="evidence" value="ECO:0007669"/>
    <property type="project" value="UniProtKB-UniRule"/>
</dbReference>
<dbReference type="GO" id="GO:0008653">
    <property type="term" value="P:lipopolysaccharide metabolic process"/>
    <property type="evidence" value="ECO:0007669"/>
    <property type="project" value="UniProtKB-UniRule"/>
</dbReference>
<dbReference type="CDD" id="cd07040">
    <property type="entry name" value="HP"/>
    <property type="match status" value="1"/>
</dbReference>
<dbReference type="Gene3D" id="3.40.50.1240">
    <property type="entry name" value="Phosphoglycerate mutase-like"/>
    <property type="match status" value="1"/>
</dbReference>
<dbReference type="HAMAP" id="MF_01868">
    <property type="entry name" value="Ais"/>
    <property type="match status" value="1"/>
</dbReference>
<dbReference type="InterPro" id="IPR013078">
    <property type="entry name" value="His_Pase_superF_clade-1"/>
</dbReference>
<dbReference type="InterPro" id="IPR029033">
    <property type="entry name" value="His_PPase_superfam"/>
</dbReference>
<dbReference type="InterPro" id="IPR011310">
    <property type="entry name" value="LipoPS_heptP_Pase"/>
</dbReference>
<dbReference type="NCBIfam" id="NF011945">
    <property type="entry name" value="PRK15416.1"/>
    <property type="match status" value="1"/>
</dbReference>
<dbReference type="Pfam" id="PF00300">
    <property type="entry name" value="His_Phos_1"/>
    <property type="match status" value="1"/>
</dbReference>
<dbReference type="PIRSF" id="PIRSF011416">
    <property type="entry name" value="Ais-TraG-AfrS"/>
    <property type="match status" value="1"/>
</dbReference>
<dbReference type="SUPFAM" id="SSF53254">
    <property type="entry name" value="Phosphoglycerate mutase-like"/>
    <property type="match status" value="1"/>
</dbReference>
<accession>B5YX43</accession>
<name>AIS_ECO5E</name>
<proteinExistence type="inferred from homology"/>
<gene>
    <name evidence="1" type="primary">ais</name>
    <name type="ordered locus">ECH74115_3393</name>
</gene>
<sequence>MLAFCRSSLKSKKYFIILLALAAIAGLGTHAAWSSNGLPRIDNKTLGRLAQQHPVVVLFRHAEHCDRSTNQCLSDKTGITVKGTQDARELGNAFSADIPDFDLYSSNTVRTIQSATWFSAGKKLTVDKRLLQCGNEIYSAIKDLQSKAPDKNIVIFTHNHCLTYIAKDKRDATFKPDYLDGLVMHVEKGKVYLDGEFVNH</sequence>
<protein>
    <recommendedName>
        <fullName evidence="1">Lipopolysaccharide core heptose(II)-phosphate phosphatase</fullName>
        <ecNumber evidence="1">3.1.3.-</ecNumber>
    </recommendedName>
</protein>
<keyword id="KW-0378">Hydrolase</keyword>
<keyword id="KW-0574">Periplasm</keyword>
<keyword id="KW-0732">Signal</keyword>
<comment type="function">
    <text evidence="1">Catalyzes the dephosphorylation of heptose(II) of the outer membrane lipopolysaccharide core.</text>
</comment>
<comment type="pathway">
    <text evidence="1">Bacterial outer membrane biogenesis; lipopolysaccharide metabolism.</text>
</comment>
<comment type="subcellular location">
    <subcellularLocation>
        <location evidence="1">Periplasm</location>
    </subcellularLocation>
</comment>
<comment type="similarity">
    <text evidence="1">Belongs to the phosphoglycerate mutase family. Ais subfamily.</text>
</comment>
<evidence type="ECO:0000255" key="1">
    <source>
        <dbReference type="HAMAP-Rule" id="MF_01868"/>
    </source>
</evidence>
<feature type="signal peptide" evidence="1">
    <location>
        <begin position="1"/>
        <end position="25"/>
    </location>
</feature>
<feature type="chain" id="PRO_0000380563" description="Lipopolysaccharide core heptose(II)-phosphate phosphatase">
    <location>
        <begin position="26"/>
        <end position="200"/>
    </location>
</feature>